<reference key="1">
    <citation type="journal article" date="2006" name="Science">
        <title>A small microbial genome: the end of a long symbiotic relationship?</title>
        <authorList>
            <person name="Perez-Brocal V."/>
            <person name="Gil R."/>
            <person name="Ramos S."/>
            <person name="Lamelas A."/>
            <person name="Postigo M."/>
            <person name="Michelena J.M."/>
            <person name="Silva F.J."/>
            <person name="Moya A."/>
            <person name="Latorre A."/>
        </authorList>
    </citation>
    <scope>NUCLEOTIDE SEQUENCE [LARGE SCALE GENOMIC DNA]</scope>
    <source>
        <strain>Cc</strain>
    </source>
</reference>
<name>RS6_BUCCC</name>
<dbReference type="EMBL" id="CP000263">
    <property type="protein sequence ID" value="ABJ90821.1"/>
    <property type="molecule type" value="Genomic_DNA"/>
</dbReference>
<dbReference type="RefSeq" id="WP_011672740.1">
    <property type="nucleotide sequence ID" value="NC_008513.1"/>
</dbReference>
<dbReference type="SMR" id="Q056X8"/>
<dbReference type="STRING" id="372461.BCc_370"/>
<dbReference type="KEGG" id="bcc:BCc_370"/>
<dbReference type="eggNOG" id="COG0360">
    <property type="taxonomic scope" value="Bacteria"/>
</dbReference>
<dbReference type="HOGENOM" id="CLU_113441_6_1_6"/>
<dbReference type="OrthoDB" id="9812702at2"/>
<dbReference type="Proteomes" id="UP000000669">
    <property type="component" value="Chromosome"/>
</dbReference>
<dbReference type="GO" id="GO:0005737">
    <property type="term" value="C:cytoplasm"/>
    <property type="evidence" value="ECO:0007669"/>
    <property type="project" value="UniProtKB-ARBA"/>
</dbReference>
<dbReference type="GO" id="GO:0015935">
    <property type="term" value="C:small ribosomal subunit"/>
    <property type="evidence" value="ECO:0007669"/>
    <property type="project" value="TreeGrafter"/>
</dbReference>
<dbReference type="GO" id="GO:0070181">
    <property type="term" value="F:small ribosomal subunit rRNA binding"/>
    <property type="evidence" value="ECO:0007669"/>
    <property type="project" value="TreeGrafter"/>
</dbReference>
<dbReference type="GO" id="GO:0003735">
    <property type="term" value="F:structural constituent of ribosome"/>
    <property type="evidence" value="ECO:0007669"/>
    <property type="project" value="InterPro"/>
</dbReference>
<dbReference type="GO" id="GO:0006412">
    <property type="term" value="P:translation"/>
    <property type="evidence" value="ECO:0007669"/>
    <property type="project" value="UniProtKB-UniRule"/>
</dbReference>
<dbReference type="CDD" id="cd00473">
    <property type="entry name" value="bS6"/>
    <property type="match status" value="1"/>
</dbReference>
<dbReference type="Gene3D" id="3.30.70.60">
    <property type="match status" value="1"/>
</dbReference>
<dbReference type="HAMAP" id="MF_00360">
    <property type="entry name" value="Ribosomal_bS6"/>
    <property type="match status" value="1"/>
</dbReference>
<dbReference type="InterPro" id="IPR000529">
    <property type="entry name" value="Ribosomal_bS6"/>
</dbReference>
<dbReference type="InterPro" id="IPR035980">
    <property type="entry name" value="Ribosomal_bS6_sf"/>
</dbReference>
<dbReference type="InterPro" id="IPR020814">
    <property type="entry name" value="Ribosomal_S6_plastid/chlpt"/>
</dbReference>
<dbReference type="InterPro" id="IPR014717">
    <property type="entry name" value="Transl_elong_EF1B/ribsomal_bS6"/>
</dbReference>
<dbReference type="NCBIfam" id="TIGR00166">
    <property type="entry name" value="S6"/>
    <property type="match status" value="1"/>
</dbReference>
<dbReference type="PANTHER" id="PTHR21011">
    <property type="entry name" value="MITOCHONDRIAL 28S RIBOSOMAL PROTEIN S6"/>
    <property type="match status" value="1"/>
</dbReference>
<dbReference type="PANTHER" id="PTHR21011:SF1">
    <property type="entry name" value="SMALL RIBOSOMAL SUBUNIT PROTEIN BS6M"/>
    <property type="match status" value="1"/>
</dbReference>
<dbReference type="Pfam" id="PF01250">
    <property type="entry name" value="Ribosomal_S6"/>
    <property type="match status" value="1"/>
</dbReference>
<dbReference type="SUPFAM" id="SSF54995">
    <property type="entry name" value="Ribosomal protein S6"/>
    <property type="match status" value="1"/>
</dbReference>
<protein>
    <recommendedName>
        <fullName evidence="1">Small ribosomal subunit protein bS6</fullName>
    </recommendedName>
    <alternativeName>
        <fullName evidence="2">30S ribosomal protein S6</fullName>
    </alternativeName>
</protein>
<comment type="function">
    <text evidence="1">Binds together with bS18 to 16S ribosomal RNA.</text>
</comment>
<comment type="similarity">
    <text evidence="1">Belongs to the bacterial ribosomal protein bS6 family.</text>
</comment>
<keyword id="KW-1185">Reference proteome</keyword>
<keyword id="KW-0687">Ribonucleoprotein</keyword>
<keyword id="KW-0689">Ribosomal protein</keyword>
<keyword id="KW-0694">RNA-binding</keyword>
<keyword id="KW-0699">rRNA-binding</keyword>
<accession>Q056X8</accession>
<feature type="chain" id="PRO_1000005225" description="Small ribosomal subunit protein bS6">
    <location>
        <begin position="1"/>
        <end position="127"/>
    </location>
</feature>
<proteinExistence type="inferred from homology"/>
<gene>
    <name evidence="1" type="primary">rpsF</name>
    <name type="ordered locus">BCc_370</name>
</gene>
<organism>
    <name type="scientific">Buchnera aphidicola subsp. Cinara cedri (strain Cc)</name>
    <dbReference type="NCBI Taxonomy" id="372461"/>
    <lineage>
        <taxon>Bacteria</taxon>
        <taxon>Pseudomonadati</taxon>
        <taxon>Pseudomonadota</taxon>
        <taxon>Gammaproteobacteria</taxon>
        <taxon>Enterobacterales</taxon>
        <taxon>Erwiniaceae</taxon>
        <taxon>Buchnera</taxon>
    </lineage>
</organism>
<sequence>MRHYEIILMINPEKNKKIFIIIEEYNKLIHMYKGIIHRFEDWGKRSLSYTIKNLKKAHYFLMNIEVSSECIKELENSFKFNINIIRYFILTRTKAHKKISPILKNKEENKKELNSSVIKINKNIKKK</sequence>
<evidence type="ECO:0000255" key="1">
    <source>
        <dbReference type="HAMAP-Rule" id="MF_00360"/>
    </source>
</evidence>
<evidence type="ECO:0000305" key="2"/>